<evidence type="ECO:0000250" key="1">
    <source>
        <dbReference type="UniProtKB" id="Q17R98"/>
    </source>
</evidence>
<evidence type="ECO:0000255" key="2">
    <source>
        <dbReference type="PROSITE-ProRule" id="PRU00042"/>
    </source>
</evidence>
<evidence type="ECO:0000256" key="3">
    <source>
        <dbReference type="SAM" id="MobiDB-lite"/>
    </source>
</evidence>
<evidence type="ECO:0000305" key="4"/>
<protein>
    <recommendedName>
        <fullName>Zinc finger protein 827</fullName>
    </recommendedName>
</protein>
<name>ZN827_MACFA</name>
<dbReference type="EMBL" id="AB056797">
    <property type="protein sequence ID" value="BAB39321.1"/>
    <property type="molecule type" value="mRNA"/>
</dbReference>
<dbReference type="STRING" id="9541.ENSMFAP00000038408"/>
<dbReference type="eggNOG" id="KOG1721">
    <property type="taxonomic scope" value="Eukaryota"/>
</dbReference>
<dbReference type="Proteomes" id="UP000233100">
    <property type="component" value="Unplaced"/>
</dbReference>
<dbReference type="GO" id="GO:0000785">
    <property type="term" value="C:chromatin"/>
    <property type="evidence" value="ECO:0000250"/>
    <property type="project" value="UniProtKB"/>
</dbReference>
<dbReference type="GO" id="GO:0000781">
    <property type="term" value="C:chromosome, telomeric region"/>
    <property type="evidence" value="ECO:0000250"/>
    <property type="project" value="UniProtKB"/>
</dbReference>
<dbReference type="GO" id="GO:0005634">
    <property type="term" value="C:nucleus"/>
    <property type="evidence" value="ECO:0007669"/>
    <property type="project" value="UniProtKB-SubCell"/>
</dbReference>
<dbReference type="GO" id="GO:1990904">
    <property type="term" value="C:ribonucleoprotein complex"/>
    <property type="evidence" value="ECO:0000250"/>
    <property type="project" value="UniProtKB"/>
</dbReference>
<dbReference type="GO" id="GO:0003677">
    <property type="term" value="F:DNA binding"/>
    <property type="evidence" value="ECO:0007669"/>
    <property type="project" value="UniProtKB-KW"/>
</dbReference>
<dbReference type="GO" id="GO:0120325">
    <property type="term" value="F:NuRD complex binding"/>
    <property type="evidence" value="ECO:0000250"/>
    <property type="project" value="UniProtKB"/>
</dbReference>
<dbReference type="GO" id="GO:0008270">
    <property type="term" value="F:zinc ion binding"/>
    <property type="evidence" value="ECO:0007669"/>
    <property type="project" value="UniProtKB-KW"/>
</dbReference>
<dbReference type="GO" id="GO:0006338">
    <property type="term" value="P:chromatin remodeling"/>
    <property type="evidence" value="ECO:0000250"/>
    <property type="project" value="UniProtKB"/>
</dbReference>
<dbReference type="GO" id="GO:0070200">
    <property type="term" value="P:establishment of protein localization to telomere"/>
    <property type="evidence" value="ECO:0000250"/>
    <property type="project" value="UniProtKB"/>
</dbReference>
<dbReference type="GO" id="GO:0045892">
    <property type="term" value="P:negative regulation of DNA-templated transcription"/>
    <property type="evidence" value="ECO:0000250"/>
    <property type="project" value="UniProtKB"/>
</dbReference>
<dbReference type="GO" id="GO:1904791">
    <property type="term" value="P:negative regulation of shelterin complex assembly"/>
    <property type="evidence" value="ECO:0000250"/>
    <property type="project" value="UniProtKB"/>
</dbReference>
<dbReference type="GO" id="GO:0045944">
    <property type="term" value="P:positive regulation of transcription by RNA polymerase II"/>
    <property type="evidence" value="ECO:0007669"/>
    <property type="project" value="TreeGrafter"/>
</dbReference>
<dbReference type="GO" id="GO:0000723">
    <property type="term" value="P:telomere maintenance"/>
    <property type="evidence" value="ECO:0000250"/>
    <property type="project" value="UniProtKB"/>
</dbReference>
<dbReference type="FunFam" id="3.30.160.60:FF:000272">
    <property type="entry name" value="Zinc finger protein 827"/>
    <property type="match status" value="1"/>
</dbReference>
<dbReference type="FunFam" id="3.30.160.60:FF:000415">
    <property type="entry name" value="Zinc finger protein 827"/>
    <property type="match status" value="1"/>
</dbReference>
<dbReference type="FunFam" id="3.30.160.60:FF:000435">
    <property type="entry name" value="Zinc finger protein 827"/>
    <property type="match status" value="1"/>
</dbReference>
<dbReference type="FunFam" id="3.30.160.60:FF:002599">
    <property type="entry name" value="Zinc finger protein 827"/>
    <property type="match status" value="1"/>
</dbReference>
<dbReference type="FunFam" id="3.30.160.60:FF:000484">
    <property type="entry name" value="zinc finger protein 827 isoform X1"/>
    <property type="match status" value="1"/>
</dbReference>
<dbReference type="Gene3D" id="3.30.160.60">
    <property type="entry name" value="Classic Zinc Finger"/>
    <property type="match status" value="5"/>
</dbReference>
<dbReference type="InterPro" id="IPR050688">
    <property type="entry name" value="Zinc_finger/UBP_domain"/>
</dbReference>
<dbReference type="InterPro" id="IPR036236">
    <property type="entry name" value="Znf_C2H2_sf"/>
</dbReference>
<dbReference type="InterPro" id="IPR013087">
    <property type="entry name" value="Znf_C2H2_type"/>
</dbReference>
<dbReference type="PANTHER" id="PTHR24403">
    <property type="entry name" value="ZINC FINGER PROTEIN"/>
    <property type="match status" value="1"/>
</dbReference>
<dbReference type="PANTHER" id="PTHR24403:SF62">
    <property type="entry name" value="ZINC FINGER PROTEIN 827"/>
    <property type="match status" value="1"/>
</dbReference>
<dbReference type="Pfam" id="PF00096">
    <property type="entry name" value="zf-C2H2"/>
    <property type="match status" value="3"/>
</dbReference>
<dbReference type="SMART" id="SM00355">
    <property type="entry name" value="ZnF_C2H2"/>
    <property type="match status" value="9"/>
</dbReference>
<dbReference type="SUPFAM" id="SSF57667">
    <property type="entry name" value="beta-beta-alpha zinc fingers"/>
    <property type="match status" value="3"/>
</dbReference>
<dbReference type="SUPFAM" id="SSF101447">
    <property type="entry name" value="Formin homology 2 domain (FH2 domain)"/>
    <property type="match status" value="1"/>
</dbReference>
<dbReference type="PROSITE" id="PS00028">
    <property type="entry name" value="ZINC_FINGER_C2H2_1"/>
    <property type="match status" value="5"/>
</dbReference>
<dbReference type="PROSITE" id="PS50157">
    <property type="entry name" value="ZINC_FINGER_C2H2_2"/>
    <property type="match status" value="5"/>
</dbReference>
<keyword id="KW-0158">Chromosome</keyword>
<keyword id="KW-0238">DNA-binding</keyword>
<keyword id="KW-1017">Isopeptide bond</keyword>
<keyword id="KW-0479">Metal-binding</keyword>
<keyword id="KW-0539">Nucleus</keyword>
<keyword id="KW-1185">Reference proteome</keyword>
<keyword id="KW-0677">Repeat</keyword>
<keyword id="KW-0779">Telomere</keyword>
<keyword id="KW-0804">Transcription</keyword>
<keyword id="KW-0805">Transcription regulation</keyword>
<keyword id="KW-0832">Ubl conjugation</keyword>
<keyword id="KW-0862">Zinc</keyword>
<keyword id="KW-0863">Zinc-finger</keyword>
<organism>
    <name type="scientific">Macaca fascicularis</name>
    <name type="common">Crab-eating macaque</name>
    <name type="synonym">Cynomolgus monkey</name>
    <dbReference type="NCBI Taxonomy" id="9541"/>
    <lineage>
        <taxon>Eukaryota</taxon>
        <taxon>Metazoa</taxon>
        <taxon>Chordata</taxon>
        <taxon>Craniata</taxon>
        <taxon>Vertebrata</taxon>
        <taxon>Euteleostomi</taxon>
        <taxon>Mammalia</taxon>
        <taxon>Eutheria</taxon>
        <taxon>Euarchontoglires</taxon>
        <taxon>Primates</taxon>
        <taxon>Haplorrhini</taxon>
        <taxon>Catarrhini</taxon>
        <taxon>Cercopithecidae</taxon>
        <taxon>Cercopithecinae</taxon>
        <taxon>Macaca</taxon>
    </lineage>
</organism>
<feature type="chain" id="PRO_0000325890" description="Zinc finger protein 827">
    <location>
        <begin position="1"/>
        <end position="1081"/>
    </location>
</feature>
<feature type="zinc finger region" description="C2H2-type 1" evidence="2">
    <location>
        <begin position="374"/>
        <end position="396"/>
    </location>
</feature>
<feature type="zinc finger region" description="C2H2-type 2" evidence="2">
    <location>
        <begin position="402"/>
        <end position="424"/>
    </location>
</feature>
<feature type="zinc finger region" description="C2H2-type 3" evidence="2">
    <location>
        <begin position="433"/>
        <end position="455"/>
    </location>
</feature>
<feature type="zinc finger region" description="C2H2-type 4" evidence="2">
    <location>
        <begin position="817"/>
        <end position="839"/>
    </location>
</feature>
<feature type="zinc finger region" description="C2H2-type 5" evidence="2">
    <location>
        <begin position="845"/>
        <end position="867"/>
    </location>
</feature>
<feature type="zinc finger region" description="C2H2-type 6" evidence="2">
    <location>
        <begin position="897"/>
        <end position="919"/>
    </location>
</feature>
<feature type="zinc finger region" description="C2H2-type 7" evidence="2">
    <location>
        <begin position="929"/>
        <end position="952"/>
    </location>
</feature>
<feature type="zinc finger region" description="C2H2-type 8" evidence="2">
    <location>
        <begin position="1019"/>
        <end position="1041"/>
    </location>
</feature>
<feature type="zinc finger region" description="C2H2-type 9" evidence="2">
    <location>
        <begin position="1047"/>
        <end position="1069"/>
    </location>
</feature>
<feature type="region of interest" description="Disordered" evidence="3">
    <location>
        <begin position="1"/>
        <end position="77"/>
    </location>
</feature>
<feature type="region of interest" description="Mediates direct interaction with RBBP4" evidence="1">
    <location>
        <begin position="1"/>
        <end position="14"/>
    </location>
</feature>
<feature type="region of interest" description="Disordered" evidence="3">
    <location>
        <begin position="258"/>
        <end position="280"/>
    </location>
</feature>
<feature type="region of interest" description="Disordered" evidence="3">
    <location>
        <begin position="305"/>
        <end position="348"/>
    </location>
</feature>
<feature type="region of interest" description="Disordered" evidence="3">
    <location>
        <begin position="525"/>
        <end position="553"/>
    </location>
</feature>
<feature type="region of interest" description="Disordered" evidence="3">
    <location>
        <begin position="616"/>
        <end position="640"/>
    </location>
</feature>
<feature type="region of interest" description="Disordered" evidence="3">
    <location>
        <begin position="947"/>
        <end position="1013"/>
    </location>
</feature>
<feature type="short sequence motif" description="RRK motif; mediates NuRD recruitment to telomeres" evidence="1">
    <location>
        <begin position="3"/>
        <end position="5"/>
    </location>
</feature>
<feature type="compositionally biased region" description="Basic and acidic residues" evidence="3">
    <location>
        <begin position="1"/>
        <end position="10"/>
    </location>
</feature>
<feature type="compositionally biased region" description="Polar residues" evidence="3">
    <location>
        <begin position="62"/>
        <end position="77"/>
    </location>
</feature>
<feature type="compositionally biased region" description="Pro residues" evidence="3">
    <location>
        <begin position="327"/>
        <end position="344"/>
    </location>
</feature>
<feature type="compositionally biased region" description="Polar residues" evidence="3">
    <location>
        <begin position="616"/>
        <end position="627"/>
    </location>
</feature>
<feature type="compositionally biased region" description="Basic and acidic residues" evidence="3">
    <location>
        <begin position="631"/>
        <end position="640"/>
    </location>
</feature>
<feature type="compositionally biased region" description="Basic and acidic residues" evidence="3">
    <location>
        <begin position="947"/>
        <end position="960"/>
    </location>
</feature>
<feature type="compositionally biased region" description="Low complexity" evidence="3">
    <location>
        <begin position="961"/>
        <end position="978"/>
    </location>
</feature>
<feature type="compositionally biased region" description="Basic and acidic residues" evidence="3">
    <location>
        <begin position="979"/>
        <end position="988"/>
    </location>
</feature>
<feature type="cross-link" description="Glycyl lysine isopeptide (Lys-Gly) (interchain with G-Cter in SUMO2)" evidence="1">
    <location>
        <position position="176"/>
    </location>
</feature>
<feature type="cross-link" description="Glycyl lysine isopeptide (Lys-Gly) (interchain with G-Cter in SUMO2)" evidence="1">
    <location>
        <position position="216"/>
    </location>
</feature>
<feature type="cross-link" description="Glycyl lysine isopeptide (Lys-Gly) (interchain with G-Cter in SUMO2)" evidence="1">
    <location>
        <position position="226"/>
    </location>
</feature>
<feature type="cross-link" description="Glycyl lysine isopeptide (Lys-Gly) (interchain with G-Cter in SUMO2)" evidence="1">
    <location>
        <position position="360"/>
    </location>
</feature>
<feature type="cross-link" description="Glycyl lysine isopeptide (Lys-Gly) (interchain with G-Cter in SUMO2)" evidence="1">
    <location>
        <position position="372"/>
    </location>
</feature>
<feature type="cross-link" description="Glycyl lysine isopeptide (Lys-Gly) (interchain with G-Cter in SUMO2)" evidence="1">
    <location>
        <position position="466"/>
    </location>
</feature>
<feature type="cross-link" description="Glycyl lysine isopeptide (Lys-Gly) (interchain with G-Cter in SUMO2)" evidence="1">
    <location>
        <position position="475"/>
    </location>
</feature>
<feature type="cross-link" description="Glycyl lysine isopeptide (Lys-Gly) (interchain with G-Cter in SUMO2)" evidence="1">
    <location>
        <position position="523"/>
    </location>
</feature>
<feature type="cross-link" description="Glycyl lysine isopeptide (Lys-Gly) (interchain with G-Cter in SUMO2)" evidence="1">
    <location>
        <position position="549"/>
    </location>
</feature>
<feature type="cross-link" description="Glycyl lysine isopeptide (Lys-Gly) (interchain with G-Cter in SUMO2)" evidence="1">
    <location>
        <position position="580"/>
    </location>
</feature>
<feature type="cross-link" description="Glycyl lysine isopeptide (Lys-Gly) (interchain with G-Cter in SUMO2)" evidence="1">
    <location>
        <position position="587"/>
    </location>
</feature>
<feature type="cross-link" description="Glycyl lysine isopeptide (Lys-Gly) (interchain with G-Cter in SUMO2)" evidence="1">
    <location>
        <position position="597"/>
    </location>
</feature>
<feature type="cross-link" description="Glycyl lysine isopeptide (Lys-Gly) (interchain with G-Cter in SUMO2)" evidence="1">
    <location>
        <position position="634"/>
    </location>
</feature>
<feature type="cross-link" description="Glycyl lysine isopeptide (Lys-Gly) (interchain with G-Cter in SUMO2)" evidence="1">
    <location>
        <position position="639"/>
    </location>
</feature>
<feature type="cross-link" description="Glycyl lysine isopeptide (Lys-Gly) (interchain with G-Cter in SUMO2)" evidence="1">
    <location>
        <position position="658"/>
    </location>
</feature>
<feature type="cross-link" description="Glycyl lysine isopeptide (Lys-Gly) (interchain with G-Cter in SUMO1); alternate" evidence="1">
    <location>
        <position position="673"/>
    </location>
</feature>
<feature type="cross-link" description="Glycyl lysine isopeptide (Lys-Gly) (interchain with G-Cter in SUMO2); alternate" evidence="1">
    <location>
        <position position="673"/>
    </location>
</feature>
<feature type="cross-link" description="Glycyl lysine isopeptide (Lys-Gly) (interchain with G-Cter in SUMO2)" evidence="1">
    <location>
        <position position="704"/>
    </location>
</feature>
<feature type="cross-link" description="Glycyl lysine isopeptide (Lys-Gly) (interchain with G-Cter in SUMO2)" evidence="1">
    <location>
        <position position="710"/>
    </location>
</feature>
<feature type="cross-link" description="Glycyl lysine isopeptide (Lys-Gly) (interchain with G-Cter in SUMO2)" evidence="1">
    <location>
        <position position="742"/>
    </location>
</feature>
<feature type="cross-link" description="Glycyl lysine isopeptide (Lys-Gly) (interchain with G-Cter in SUMO2)" evidence="1">
    <location>
        <position position="778"/>
    </location>
</feature>
<feature type="cross-link" description="Glycyl lysine isopeptide (Lys-Gly) (interchain with G-Cter in SUMO2)" evidence="1">
    <location>
        <position position="798"/>
    </location>
</feature>
<feature type="cross-link" description="Glycyl lysine isopeptide (Lys-Gly) (interchain with G-Cter in SUMO2)" evidence="1">
    <location>
        <position position="870"/>
    </location>
</feature>
<feature type="cross-link" description="Glycyl lysine isopeptide (Lys-Gly) (interchain with G-Cter in SUMO2)" evidence="1">
    <location>
        <position position="891"/>
    </location>
</feature>
<feature type="cross-link" description="Glycyl lysine isopeptide (Lys-Gly) (interchain with G-Cter in SUMO2)" evidence="1">
    <location>
        <position position="958"/>
    </location>
</feature>
<feature type="cross-link" description="Glycyl lysine isopeptide (Lys-Gly) (interchain with G-Cter in SUMO2)" evidence="1">
    <location>
        <position position="1014"/>
    </location>
</feature>
<accession>Q9BE73</accession>
<gene>
    <name type="primary">ZNF827</name>
    <name type="ORF">QflA-10067</name>
</gene>
<comment type="function">
    <text evidence="1">As part of a ribonucleoprotein complex composed at least of HNRNPK, HNRNPL and the circular RNA circZNF827 that nucleates the complex on chromatin, may negatively regulate the transcription of genes involved in neuronal differentiation. Could also recruit the nucleosome remodeling and histone deacetylase/NuRD complex to telomeric regions of chromosomes to regulate chromatin remodeling as part of telomere maintenance.</text>
</comment>
<comment type="subunit">
    <text evidence="1">Part of a transcription inhibitory ribonucleoprotein complex composed at least of the circular RNA circZNF827, HNRNPK and HNRNPL. Interacts with the nucleosome remodeling and histone deacetylase/NuRD complex. Interacts with RBBP4; the interaction is direct and recruits RBBP4, a component of the NuRD complex, to telomeres.</text>
</comment>
<comment type="subcellular location">
    <subcellularLocation>
        <location evidence="1">Nucleus</location>
    </subcellularLocation>
    <subcellularLocation>
        <location evidence="1">Chromosome</location>
        <location evidence="1">Telomere</location>
    </subcellularLocation>
</comment>
<comment type="similarity">
    <text evidence="4">Belongs to the krueppel C2H2-type zinc-finger protein family.</text>
</comment>
<proteinExistence type="evidence at transcript level"/>
<sequence>MPRRKQEQPKRLPSHVSRQEEAEGELSEGEHWYGNSSETPSEASFGEVQENYKLSLEDRIQEQSTSPDTSLGSTTPSSHTLELVALDGEVLRDSLQCQDHLSPGVSSLCDDDPGSNKPLSSNLRRLLEAGSLKLDAVATANGRVESPVNVGSNLSFSPPSHHAQQLSVLARKLAEKQEQNDQYTPSNRFIWNQGKWLPNSTTTCSLSPDSAILKLKAAANAVLQDKSLTRTEETMRFESFSSPFSSQSASSTLAALSKKVSERSLTPGQEHPPPASSFLSLAPMTSSAALLKEVAARAAGSLLAEKSSLLPEDPLPPPPSEKKPEKVSPPPPPPPPPPPPPPPQSLELLLLPVPKGRVSKPSNSASEEESGKPFQCPICGLVIKRKSYWKRHMVIHTGLKSHQCPLCPFRCARKDNLKSHMKVHQHQDRGETFQCQLCPFTSSRHFSLKLHMRCHQHFLRTEAKVKEEIPDPDVKGSPHLSDSACLGQQREGGGTELVGTMMTSNTPERTSQGGAGVSPLLVKEEPKEDNGLPTSFTLNTADRPANHTKLKDPSEYVANSASALFSQDISVKMASDFLMKLSAANQKEPMNLNFKVKEEPKEGESLSTTLPRSSYVFSPESEVSTPGVSEDALKPQEGKGNVLRRDVSVKAASELLMKLSAESYKETQMVKIKEEPMEVDIQDSHVSISPSRNVGYSTLIGREKTEPLQKMPEGRVPPERNLFSQDISVKMASELLFQLSEKVSKEHNHTKENTIRTTTSPFFSEDTFRQSPFTSNSKELLPSESVLHGRISAPETEKIVLEAGNGLPSWKFNDQLFPCDVCGKVFGRQQTLSRHLSLHTEERKYKCHLCPYAAKCRANLNQHLTVHSVKLVSTDTEDIVSAVTSEGSDGKKHPYYYSCHVCGFETELNVQFVSHMSLHVDKEQWMFSICCTACDFVTMEEAEIKTHIGTKHTGEDRKTPSESNSPSSSSLSALSDSANSKDDSDGSQKNKGGNNLLVVSVMPGSQPSLNSEEKPEKGFECVFCNFVCKTKNMFERHLQIHLITRMFECDVCHKFMKTPEQLLEHKKCHTVPTGGLNSGQW</sequence>
<reference key="1">
    <citation type="submission" date="2001-03" db="EMBL/GenBank/DDBJ databases">
        <authorList>
            <person name="Hashimoto K."/>
            <person name="Osada N."/>
            <person name="Hida M."/>
            <person name="Kusuda J."/>
            <person name="Sugano S."/>
        </authorList>
    </citation>
    <scope>NUCLEOTIDE SEQUENCE [LARGE SCALE MRNA]</scope>
    <source>
        <tissue>Frontal cortex</tissue>
    </source>
</reference>